<feature type="chain" id="PRO_0000148580" description="Argininosuccinate synthase">
    <location>
        <begin position="1"/>
        <end position="406"/>
    </location>
</feature>
<feature type="binding site" evidence="1">
    <location>
        <begin position="11"/>
        <end position="19"/>
    </location>
    <ligand>
        <name>ATP</name>
        <dbReference type="ChEBI" id="CHEBI:30616"/>
    </ligand>
</feature>
<feature type="binding site" evidence="1">
    <location>
        <position position="38"/>
    </location>
    <ligand>
        <name>ATP</name>
        <dbReference type="ChEBI" id="CHEBI:30616"/>
    </ligand>
</feature>
<feature type="binding site" evidence="1">
    <location>
        <position position="91"/>
    </location>
    <ligand>
        <name>L-citrulline</name>
        <dbReference type="ChEBI" id="CHEBI:57743"/>
    </ligand>
</feature>
<feature type="binding site" evidence="1">
    <location>
        <position position="96"/>
    </location>
    <ligand>
        <name>L-citrulline</name>
        <dbReference type="ChEBI" id="CHEBI:57743"/>
    </ligand>
</feature>
<feature type="binding site" evidence="1">
    <location>
        <position position="121"/>
    </location>
    <ligand>
        <name>ATP</name>
        <dbReference type="ChEBI" id="CHEBI:30616"/>
    </ligand>
</feature>
<feature type="binding site" evidence="1">
    <location>
        <position position="123"/>
    </location>
    <ligand>
        <name>L-aspartate</name>
        <dbReference type="ChEBI" id="CHEBI:29991"/>
    </ligand>
</feature>
<feature type="binding site" evidence="1">
    <location>
        <position position="127"/>
    </location>
    <ligand>
        <name>L-aspartate</name>
        <dbReference type="ChEBI" id="CHEBI:29991"/>
    </ligand>
</feature>
<feature type="binding site" evidence="1">
    <location>
        <position position="127"/>
    </location>
    <ligand>
        <name>L-citrulline</name>
        <dbReference type="ChEBI" id="CHEBI:57743"/>
    </ligand>
</feature>
<feature type="binding site" evidence="1">
    <location>
        <position position="128"/>
    </location>
    <ligand>
        <name>L-aspartate</name>
        <dbReference type="ChEBI" id="CHEBI:29991"/>
    </ligand>
</feature>
<feature type="binding site" evidence="1">
    <location>
        <position position="131"/>
    </location>
    <ligand>
        <name>L-citrulline</name>
        <dbReference type="ChEBI" id="CHEBI:57743"/>
    </ligand>
</feature>
<feature type="binding site" evidence="1">
    <location>
        <position position="181"/>
    </location>
    <ligand>
        <name>L-citrulline</name>
        <dbReference type="ChEBI" id="CHEBI:57743"/>
    </ligand>
</feature>
<feature type="binding site" evidence="1">
    <location>
        <position position="190"/>
    </location>
    <ligand>
        <name>L-citrulline</name>
        <dbReference type="ChEBI" id="CHEBI:57743"/>
    </ligand>
</feature>
<feature type="binding site" evidence="1">
    <location>
        <position position="266"/>
    </location>
    <ligand>
        <name>L-citrulline</name>
        <dbReference type="ChEBI" id="CHEBI:57743"/>
    </ligand>
</feature>
<feature type="binding site" evidence="1">
    <location>
        <position position="278"/>
    </location>
    <ligand>
        <name>L-citrulline</name>
        <dbReference type="ChEBI" id="CHEBI:57743"/>
    </ligand>
</feature>
<feature type="strand" evidence="2">
    <location>
        <begin position="7"/>
        <end position="11"/>
    </location>
</feature>
<feature type="helix" evidence="2">
    <location>
        <begin position="16"/>
        <end position="28"/>
    </location>
</feature>
<feature type="strand" evidence="2">
    <location>
        <begin position="32"/>
        <end position="41"/>
    </location>
</feature>
<feature type="helix" evidence="2">
    <location>
        <begin position="47"/>
        <end position="55"/>
    </location>
</feature>
<feature type="helix" evidence="2">
    <location>
        <begin position="60"/>
        <end position="62"/>
    </location>
</feature>
<feature type="strand" evidence="2">
    <location>
        <begin position="63"/>
        <end position="67"/>
    </location>
</feature>
<feature type="helix" evidence="2">
    <location>
        <begin position="69"/>
        <end position="75"/>
    </location>
</feature>
<feature type="helix" evidence="2">
    <location>
        <begin position="77"/>
        <end position="81"/>
    </location>
</feature>
<feature type="turn" evidence="2">
    <location>
        <begin position="82"/>
        <end position="84"/>
    </location>
</feature>
<feature type="turn" evidence="2">
    <location>
        <begin position="88"/>
        <end position="90"/>
    </location>
</feature>
<feature type="helix" evidence="2">
    <location>
        <begin position="94"/>
        <end position="113"/>
    </location>
</feature>
<feature type="strand" evidence="2">
    <location>
        <begin position="116"/>
        <end position="119"/>
    </location>
</feature>
<feature type="helix" evidence="2">
    <location>
        <begin position="128"/>
        <end position="139"/>
    </location>
</feature>
<feature type="strand" evidence="2">
    <location>
        <begin position="144"/>
        <end position="146"/>
    </location>
</feature>
<feature type="helix" evidence="2">
    <location>
        <begin position="148"/>
        <end position="151"/>
    </location>
</feature>
<feature type="helix" evidence="2">
    <location>
        <begin position="158"/>
        <end position="166"/>
    </location>
</feature>
<feature type="strand" evidence="2">
    <location>
        <begin position="179"/>
        <end position="184"/>
    </location>
</feature>
<feature type="strand" evidence="2">
    <location>
        <begin position="189"/>
        <end position="193"/>
    </location>
</feature>
<feature type="helix" evidence="2">
    <location>
        <begin position="194"/>
        <end position="197"/>
    </location>
</feature>
<feature type="helix" evidence="2">
    <location>
        <begin position="205"/>
        <end position="207"/>
    </location>
</feature>
<feature type="turn" evidence="2">
    <location>
        <begin position="214"/>
        <end position="216"/>
    </location>
</feature>
<feature type="strand" evidence="2">
    <location>
        <begin position="222"/>
        <end position="229"/>
    </location>
</feature>
<feature type="strand" evidence="2">
    <location>
        <begin position="232"/>
        <end position="236"/>
    </location>
</feature>
<feature type="helix" evidence="2">
    <location>
        <begin position="243"/>
        <end position="256"/>
    </location>
</feature>
<feature type="strand" evidence="2">
    <location>
        <begin position="261"/>
        <end position="267"/>
    </location>
</feature>
<feature type="strand" evidence="2">
    <location>
        <begin position="269"/>
        <end position="279"/>
    </location>
</feature>
<feature type="helix" evidence="2">
    <location>
        <begin position="281"/>
        <end position="297"/>
    </location>
</feature>
<feature type="helix" evidence="2">
    <location>
        <begin position="300"/>
        <end position="319"/>
    </location>
</feature>
<feature type="strand" evidence="2">
    <location>
        <begin position="322"/>
        <end position="324"/>
    </location>
</feature>
<feature type="helix" evidence="2">
    <location>
        <begin position="325"/>
        <end position="336"/>
    </location>
</feature>
<feature type="turn" evidence="2">
    <location>
        <begin position="337"/>
        <end position="340"/>
    </location>
</feature>
<feature type="strand" evidence="2">
    <location>
        <begin position="343"/>
        <end position="350"/>
    </location>
</feature>
<feature type="strand" evidence="2">
    <location>
        <begin position="353"/>
        <end position="360"/>
    </location>
</feature>
<feature type="helix" evidence="2">
    <location>
        <begin position="382"/>
        <end position="401"/>
    </location>
</feature>
<protein>
    <recommendedName>
        <fullName evidence="1">Argininosuccinate synthase</fullName>
        <ecNumber evidence="1">6.3.4.5</ecNumber>
    </recommendedName>
    <alternativeName>
        <fullName evidence="1">Citrulline--aspartate ligase</fullName>
    </alternativeName>
</protein>
<keyword id="KW-0002">3D-structure</keyword>
<keyword id="KW-0028">Amino-acid biosynthesis</keyword>
<keyword id="KW-0055">Arginine biosynthesis</keyword>
<keyword id="KW-0067">ATP-binding</keyword>
<keyword id="KW-0963">Cytoplasm</keyword>
<keyword id="KW-0436">Ligase</keyword>
<keyword id="KW-0547">Nucleotide-binding</keyword>
<keyword id="KW-1185">Reference proteome</keyword>
<proteinExistence type="evidence at protein level"/>
<dbReference type="EC" id="6.3.4.5" evidence="1"/>
<dbReference type="EMBL" id="AL111168">
    <property type="protein sequence ID" value="CAL34806.1"/>
    <property type="molecule type" value="Genomic_DNA"/>
</dbReference>
<dbReference type="PIR" id="C81415">
    <property type="entry name" value="C81415"/>
</dbReference>
<dbReference type="RefSeq" id="WP_002852200.1">
    <property type="nucleotide sequence ID" value="NZ_SZUC01000002.1"/>
</dbReference>
<dbReference type="RefSeq" id="YP_002344089.1">
    <property type="nucleotide sequence ID" value="NC_002163.1"/>
</dbReference>
<dbReference type="PDB" id="4NZP">
    <property type="method" value="X-ray"/>
    <property type="resolution" value="2.31 A"/>
    <property type="chains" value="A=1-406"/>
</dbReference>
<dbReference type="PDBsum" id="4NZP"/>
<dbReference type="SMR" id="Q9PHK7"/>
<dbReference type="IntAct" id="Q9PHK7">
    <property type="interactions" value="42"/>
</dbReference>
<dbReference type="STRING" id="192222.Cj0665c"/>
<dbReference type="PaxDb" id="192222-Cj0665c"/>
<dbReference type="EnsemblBacteria" id="CAL34806">
    <property type="protein sequence ID" value="CAL34806"/>
    <property type="gene ID" value="Cj0665c"/>
</dbReference>
<dbReference type="GeneID" id="904988"/>
<dbReference type="KEGG" id="cje:Cj0665c"/>
<dbReference type="PATRIC" id="fig|192222.6.peg.657"/>
<dbReference type="eggNOG" id="COG0137">
    <property type="taxonomic scope" value="Bacteria"/>
</dbReference>
<dbReference type="HOGENOM" id="CLU_032784_4_2_7"/>
<dbReference type="OrthoDB" id="9801641at2"/>
<dbReference type="UniPathway" id="UPA00068">
    <property type="reaction ID" value="UER00113"/>
</dbReference>
<dbReference type="EvolutionaryTrace" id="Q9PHK7"/>
<dbReference type="Proteomes" id="UP000000799">
    <property type="component" value="Chromosome"/>
</dbReference>
<dbReference type="GO" id="GO:0005737">
    <property type="term" value="C:cytoplasm"/>
    <property type="evidence" value="ECO:0007669"/>
    <property type="project" value="UniProtKB-SubCell"/>
</dbReference>
<dbReference type="GO" id="GO:0004055">
    <property type="term" value="F:argininosuccinate synthase activity"/>
    <property type="evidence" value="ECO:0007669"/>
    <property type="project" value="UniProtKB-UniRule"/>
</dbReference>
<dbReference type="GO" id="GO:0005524">
    <property type="term" value="F:ATP binding"/>
    <property type="evidence" value="ECO:0007669"/>
    <property type="project" value="UniProtKB-UniRule"/>
</dbReference>
<dbReference type="GO" id="GO:0000053">
    <property type="term" value="P:argininosuccinate metabolic process"/>
    <property type="evidence" value="ECO:0007669"/>
    <property type="project" value="TreeGrafter"/>
</dbReference>
<dbReference type="GO" id="GO:0006526">
    <property type="term" value="P:L-arginine biosynthetic process"/>
    <property type="evidence" value="ECO:0007669"/>
    <property type="project" value="UniProtKB-UniRule"/>
</dbReference>
<dbReference type="GO" id="GO:0000050">
    <property type="term" value="P:urea cycle"/>
    <property type="evidence" value="ECO:0007669"/>
    <property type="project" value="TreeGrafter"/>
</dbReference>
<dbReference type="CDD" id="cd01999">
    <property type="entry name" value="ASS"/>
    <property type="match status" value="1"/>
</dbReference>
<dbReference type="FunFam" id="3.40.50.620:FF:000019">
    <property type="entry name" value="Argininosuccinate synthase"/>
    <property type="match status" value="1"/>
</dbReference>
<dbReference type="FunFam" id="3.90.1260.10:FF:000007">
    <property type="entry name" value="Argininosuccinate synthase"/>
    <property type="match status" value="1"/>
</dbReference>
<dbReference type="Gene3D" id="3.90.1260.10">
    <property type="entry name" value="Argininosuccinate synthetase, chain A, domain 2"/>
    <property type="match status" value="1"/>
</dbReference>
<dbReference type="Gene3D" id="3.40.50.620">
    <property type="entry name" value="HUPs"/>
    <property type="match status" value="1"/>
</dbReference>
<dbReference type="Gene3D" id="1.20.5.470">
    <property type="entry name" value="Single helix bin"/>
    <property type="match status" value="1"/>
</dbReference>
<dbReference type="HAMAP" id="MF_00005">
    <property type="entry name" value="Arg_succ_synth_type1"/>
    <property type="match status" value="1"/>
</dbReference>
<dbReference type="InterPro" id="IPR048268">
    <property type="entry name" value="Arginosuc_syn_C"/>
</dbReference>
<dbReference type="InterPro" id="IPR048267">
    <property type="entry name" value="Arginosuc_syn_N"/>
</dbReference>
<dbReference type="InterPro" id="IPR001518">
    <property type="entry name" value="Arginosuc_synth"/>
</dbReference>
<dbReference type="InterPro" id="IPR018223">
    <property type="entry name" value="Arginosuc_synth_CS"/>
</dbReference>
<dbReference type="InterPro" id="IPR023434">
    <property type="entry name" value="Arginosuc_synth_type_1_subfam"/>
</dbReference>
<dbReference type="InterPro" id="IPR024074">
    <property type="entry name" value="AS_cat/multimer_dom_body"/>
</dbReference>
<dbReference type="InterPro" id="IPR014729">
    <property type="entry name" value="Rossmann-like_a/b/a_fold"/>
</dbReference>
<dbReference type="NCBIfam" id="TIGR00032">
    <property type="entry name" value="argG"/>
    <property type="match status" value="1"/>
</dbReference>
<dbReference type="NCBIfam" id="NF001770">
    <property type="entry name" value="PRK00509.1"/>
    <property type="match status" value="1"/>
</dbReference>
<dbReference type="PANTHER" id="PTHR11587">
    <property type="entry name" value="ARGININOSUCCINATE SYNTHASE"/>
    <property type="match status" value="1"/>
</dbReference>
<dbReference type="PANTHER" id="PTHR11587:SF2">
    <property type="entry name" value="ARGININOSUCCINATE SYNTHASE"/>
    <property type="match status" value="1"/>
</dbReference>
<dbReference type="Pfam" id="PF20979">
    <property type="entry name" value="Arginosuc_syn_C"/>
    <property type="match status" value="1"/>
</dbReference>
<dbReference type="Pfam" id="PF00764">
    <property type="entry name" value="Arginosuc_synth"/>
    <property type="match status" value="1"/>
</dbReference>
<dbReference type="SUPFAM" id="SSF52402">
    <property type="entry name" value="Adenine nucleotide alpha hydrolases-like"/>
    <property type="match status" value="1"/>
</dbReference>
<dbReference type="SUPFAM" id="SSF69864">
    <property type="entry name" value="Argininosuccinate synthetase, C-terminal domain"/>
    <property type="match status" value="1"/>
</dbReference>
<dbReference type="PROSITE" id="PS00564">
    <property type="entry name" value="ARGININOSUCCIN_SYN_1"/>
    <property type="match status" value="1"/>
</dbReference>
<dbReference type="PROSITE" id="PS00565">
    <property type="entry name" value="ARGININOSUCCIN_SYN_2"/>
    <property type="match status" value="1"/>
</dbReference>
<sequence length="406" mass="45578">MKNEVKKVVLAYSGGLDTSIILKWLQDEYNCEVVTFTADIGQGEELEPARKKALSLGIKEENIFIKDLRDEFVKDYVFPMFRANAIYEGEYLLGTSIARPLIAKTQAQIALQTGADAVSHGATGKGNDQVRFELGYLAFSPDLKIIAPWREWDLNSREKLLAYAQKHGIDISKKKGKSPYSMDANLLHISYEGLVLEDPAHAPEEDMWRWSKSPKDAPNESEIIELDFQKGDLVAINGEKLSPAGLLTKLNELGCKHGIGRLDIVENRYVGMKSRGCYETPGGTILLKAHRALESITLDREAAHLKDELMPKYASLIYNGYWFSPERMMLQALIDESQIHANGRVKLELYKGNVMVIGRESANDSLFNAAYCTFEEDEVYNQKDAAGFIKLNALRFIIAGKNGRKF</sequence>
<gene>
    <name evidence="1" type="primary">argG</name>
    <name type="ordered locus">Cj0665c</name>
</gene>
<evidence type="ECO:0000255" key="1">
    <source>
        <dbReference type="HAMAP-Rule" id="MF_00005"/>
    </source>
</evidence>
<evidence type="ECO:0007829" key="2">
    <source>
        <dbReference type="PDB" id="4NZP"/>
    </source>
</evidence>
<reference key="1">
    <citation type="journal article" date="2000" name="Nature">
        <title>The genome sequence of the food-borne pathogen Campylobacter jejuni reveals hypervariable sequences.</title>
        <authorList>
            <person name="Parkhill J."/>
            <person name="Wren B.W."/>
            <person name="Mungall K.L."/>
            <person name="Ketley J.M."/>
            <person name="Churcher C.M."/>
            <person name="Basham D."/>
            <person name="Chillingworth T."/>
            <person name="Davies R.M."/>
            <person name="Feltwell T."/>
            <person name="Holroyd S."/>
            <person name="Jagels K."/>
            <person name="Karlyshev A.V."/>
            <person name="Moule S."/>
            <person name="Pallen M.J."/>
            <person name="Penn C.W."/>
            <person name="Quail M.A."/>
            <person name="Rajandream M.A."/>
            <person name="Rutherford K.M."/>
            <person name="van Vliet A.H.M."/>
            <person name="Whitehead S."/>
            <person name="Barrell B.G."/>
        </authorList>
    </citation>
    <scope>NUCLEOTIDE SEQUENCE [LARGE SCALE GENOMIC DNA]</scope>
    <source>
        <strain>ATCC 700819 / NCTC 11168</strain>
    </source>
</reference>
<organism>
    <name type="scientific">Campylobacter jejuni subsp. jejuni serotype O:2 (strain ATCC 700819 / NCTC 11168)</name>
    <dbReference type="NCBI Taxonomy" id="192222"/>
    <lineage>
        <taxon>Bacteria</taxon>
        <taxon>Pseudomonadati</taxon>
        <taxon>Campylobacterota</taxon>
        <taxon>Epsilonproteobacteria</taxon>
        <taxon>Campylobacterales</taxon>
        <taxon>Campylobacteraceae</taxon>
        <taxon>Campylobacter</taxon>
    </lineage>
</organism>
<comment type="catalytic activity">
    <reaction evidence="1">
        <text>L-citrulline + L-aspartate + ATP = 2-(N(omega)-L-arginino)succinate + AMP + diphosphate + H(+)</text>
        <dbReference type="Rhea" id="RHEA:10932"/>
        <dbReference type="ChEBI" id="CHEBI:15378"/>
        <dbReference type="ChEBI" id="CHEBI:29991"/>
        <dbReference type="ChEBI" id="CHEBI:30616"/>
        <dbReference type="ChEBI" id="CHEBI:33019"/>
        <dbReference type="ChEBI" id="CHEBI:57472"/>
        <dbReference type="ChEBI" id="CHEBI:57743"/>
        <dbReference type="ChEBI" id="CHEBI:456215"/>
        <dbReference type="EC" id="6.3.4.5"/>
    </reaction>
</comment>
<comment type="pathway">
    <text evidence="1">Amino-acid biosynthesis; L-arginine biosynthesis; L-arginine from L-ornithine and carbamoyl phosphate: step 2/3.</text>
</comment>
<comment type="subunit">
    <text evidence="1">Homotetramer.</text>
</comment>
<comment type="subcellular location">
    <subcellularLocation>
        <location evidence="1">Cytoplasm</location>
    </subcellularLocation>
</comment>
<comment type="similarity">
    <text evidence="1">Belongs to the argininosuccinate synthase family. Type 1 subfamily.</text>
</comment>
<name>ASSY_CAMJE</name>
<accession>Q9PHK7</accession>
<accession>Q0PAK8</accession>